<gene>
    <name evidence="6" type="ordered locus">PG_1778</name>
</gene>
<name>LPXH_PORGI</name>
<comment type="function">
    <text evidence="2">Hydrolyzes the pyrophosphate bond of UDP-2,3-diacylglucosamine to yield 2,3-diacylglucosamine 1-phosphate (lipid X) and UMP by catalyzing the attack of water at the alpha-P atom (By similarity). Involved in the biosynthesis of lipid A, a phosphorylated glycolipid that anchors the lipopolysaccharide to the outer membrane of the cell (By similarity).</text>
</comment>
<comment type="catalytic activity">
    <reaction evidence="2">
        <text>UDP-2-N,3-O-bis[(3R)-3-hydroxytetradecanoyl]-alpha-D-glucosamine + H2O = 2-N,3-O-bis[(3R)-3-hydroxytetradecanoyl]-alpha-D-glucosaminyl 1-phosphate + UMP + 2 H(+)</text>
        <dbReference type="Rhea" id="RHEA:25213"/>
        <dbReference type="ChEBI" id="CHEBI:15377"/>
        <dbReference type="ChEBI" id="CHEBI:15378"/>
        <dbReference type="ChEBI" id="CHEBI:57865"/>
        <dbReference type="ChEBI" id="CHEBI:57957"/>
        <dbReference type="ChEBI" id="CHEBI:78847"/>
        <dbReference type="EC" id="3.6.1.54"/>
    </reaction>
</comment>
<comment type="cofactor">
    <cofactor evidence="3">
        <name>Mn(2+)</name>
        <dbReference type="ChEBI" id="CHEBI:29035"/>
    </cofactor>
    <text evidence="3">Binds 2 Mn(2+) ions per subunit in a binuclear metal center.</text>
</comment>
<comment type="pathway">
    <text evidence="2">Glycolipid biosynthesis; lipid IV(A) biosynthesis; lipid IV(A) from (3R)-3-hydroxytetradecanoyl-[acyl-carrier-protein] and UDP-N-acetyl-alpha-D-glucosamine: step 4/6.</text>
</comment>
<comment type="subcellular location">
    <subcellularLocation>
        <location evidence="2">Cell inner membrane</location>
        <topology evidence="2">Peripheral membrane protein</topology>
        <orientation evidence="2">Cytoplasmic side</orientation>
    </subcellularLocation>
    <subcellularLocation>
        <location evidence="2">Cytoplasm</location>
    </subcellularLocation>
</comment>
<comment type="induction">
    <text evidence="4">Induced by oxidative stress due to hydrogen peroxide.</text>
</comment>
<comment type="disruption phenotype">
    <text evidence="4">Loss of viability.</text>
</comment>
<comment type="miscellaneous">
    <text evidence="4">The grpE-dnaJ-PG1777-PG1778-PG1779 genes are co-transcribed and may form an operon.</text>
</comment>
<comment type="similarity">
    <text evidence="2">Belongs to the LpxH family.</text>
</comment>
<evidence type="ECO:0000250" key="1">
    <source>
        <dbReference type="UniProtKB" id="C5B8V8"/>
    </source>
</evidence>
<evidence type="ECO:0000250" key="2">
    <source>
        <dbReference type="UniProtKB" id="P43341"/>
    </source>
</evidence>
<evidence type="ECO:0000250" key="3">
    <source>
        <dbReference type="UniProtKB" id="P44046"/>
    </source>
</evidence>
<evidence type="ECO:0000269" key="4">
    <source>
    </source>
</evidence>
<evidence type="ECO:0000305" key="5"/>
<evidence type="ECO:0000312" key="6">
    <source>
        <dbReference type="EMBL" id="AAQ66779.1"/>
    </source>
</evidence>
<evidence type="ECO:0000312" key="7">
    <source>
        <dbReference type="Proteomes" id="UP000000588"/>
    </source>
</evidence>
<reference evidence="7" key="1">
    <citation type="journal article" date="2003" name="J. Bacteriol.">
        <title>Complete genome sequence of the oral pathogenic bacterium Porphyromonas gingivalis strain W83.</title>
        <authorList>
            <person name="Nelson K.E."/>
            <person name="Fleischmann R.D."/>
            <person name="DeBoy R.T."/>
            <person name="Paulsen I.T."/>
            <person name="Fouts D.E."/>
            <person name="Eisen J.A."/>
            <person name="Daugherty S.C."/>
            <person name="Dodson R.J."/>
            <person name="Durkin A.S."/>
            <person name="Gwinn M.L."/>
            <person name="Haft D.H."/>
            <person name="Kolonay J.F."/>
            <person name="Nelson W.C."/>
            <person name="Mason T.M."/>
            <person name="Tallon L."/>
            <person name="Gray J."/>
            <person name="Granger D."/>
            <person name="Tettelin H."/>
            <person name="Dong H."/>
            <person name="Galvin J.L."/>
            <person name="Duncan M.J."/>
            <person name="Dewhirst F.E."/>
            <person name="Fraser C.M."/>
        </authorList>
    </citation>
    <scope>NUCLEOTIDE SEQUENCE [LARGE SCALE GENOMIC DNA]</scope>
    <source>
        <strain evidence="7">ATCC BAA-308 / W83</strain>
    </source>
</reference>
<reference evidence="5" key="2">
    <citation type="journal article" date="2016" name="Microbiology">
        <title>Role of the Porphyromonas gingivalis iron-binding protein PG1777 in oxidative stress resistance.</title>
        <authorList>
            <person name="McKenzie R.M.E."/>
            <person name="Henry L.G."/>
            <person name="Boutrin M.C."/>
            <person name="Ximinies A."/>
            <person name="Fletcher H.M."/>
        </authorList>
    </citation>
    <scope>INDUCTION BY HYDROGEN PEROXIDE</scope>
    <scope>DISRUPTION PHENOTYPE</scope>
</reference>
<feature type="chain" id="PRO_0000458855" description="UDP-2,3-diacylglucosamine hydrolase">
    <location>
        <begin position="1"/>
        <end position="262"/>
    </location>
</feature>
<feature type="binding site" evidence="3">
    <location>
        <position position="10"/>
    </location>
    <ligand>
        <name>Mn(2+)</name>
        <dbReference type="ChEBI" id="CHEBI:29035"/>
        <label>1</label>
    </ligand>
</feature>
<feature type="binding site" evidence="3">
    <location>
        <position position="12"/>
    </location>
    <ligand>
        <name>Mn(2+)</name>
        <dbReference type="ChEBI" id="CHEBI:29035"/>
        <label>1</label>
    </ligand>
</feature>
<feature type="binding site" evidence="3">
    <location>
        <position position="47"/>
    </location>
    <ligand>
        <name>Mn(2+)</name>
        <dbReference type="ChEBI" id="CHEBI:29035"/>
        <label>1</label>
    </ligand>
</feature>
<feature type="binding site" evidence="3">
    <location>
        <position position="47"/>
    </location>
    <ligand>
        <name>Mn(2+)</name>
        <dbReference type="ChEBI" id="CHEBI:29035"/>
        <label>2</label>
    </ligand>
</feature>
<feature type="binding site" evidence="3">
    <location>
        <position position="86"/>
    </location>
    <ligand>
        <name>Mn(2+)</name>
        <dbReference type="ChEBI" id="CHEBI:29035"/>
        <label>2</label>
    </ligand>
</feature>
<feature type="binding site" evidence="3">
    <location>
        <position position="121"/>
    </location>
    <ligand>
        <name>Mn(2+)</name>
        <dbReference type="ChEBI" id="CHEBI:29035"/>
        <label>2</label>
    </ligand>
</feature>
<feature type="binding site" evidence="3">
    <location>
        <position position="218"/>
    </location>
    <ligand>
        <name>Mn(2+)</name>
        <dbReference type="ChEBI" id="CHEBI:29035"/>
        <label>2</label>
    </ligand>
</feature>
<feature type="binding site" evidence="5">
    <location>
        <position position="220"/>
    </location>
    <ligand>
        <name>Mn(2+)</name>
        <dbReference type="ChEBI" id="CHEBI:29035"/>
        <label>1</label>
    </ligand>
</feature>
<accession>Q7MTZ8</accession>
<sequence>MRSKIYFTSDAHLGSRHHADPMTVERRLAAWLERIRHEAKAIYFMGDMFDYWFEYRYVVPRGFTRFLGKVAELSDEGVEIHFFAGNHDVWLTDYLTKELGAHVHMHGITVELSGKLFRLAHGDEEYRSVKRSYDCMYRLFRNPLARLLYAAVHPRWTVGLAYGISLKSRRSGEKRKTLGNIPHAYSNDYFDIENEWLIRFAKEHSARHPEVDFYIFGHRHLLVDMALRDEKRVLILGDWIRYNSYAVWDGTTLVLESMEDME</sequence>
<dbReference type="EC" id="3.6.1.54" evidence="2"/>
<dbReference type="EMBL" id="AE015924">
    <property type="protein sequence ID" value="AAQ66779.1"/>
    <property type="molecule type" value="Genomic_DNA"/>
</dbReference>
<dbReference type="RefSeq" id="WP_005873741.1">
    <property type="nucleotide sequence ID" value="NC_002950.2"/>
</dbReference>
<dbReference type="SMR" id="Q7MTZ8"/>
<dbReference type="STRING" id="242619.PG_1778"/>
<dbReference type="EnsemblBacteria" id="AAQ66779">
    <property type="protein sequence ID" value="AAQ66779"/>
    <property type="gene ID" value="PG_1778"/>
</dbReference>
<dbReference type="KEGG" id="pgi:PG_1778"/>
<dbReference type="eggNOG" id="COG2908">
    <property type="taxonomic scope" value="Bacteria"/>
</dbReference>
<dbReference type="HOGENOM" id="CLU_074586_1_0_10"/>
<dbReference type="BioCyc" id="PGIN242619:G1G02-1659-MONOMER"/>
<dbReference type="UniPathway" id="UPA00359">
    <property type="reaction ID" value="UER00480"/>
</dbReference>
<dbReference type="Proteomes" id="UP000000588">
    <property type="component" value="Chromosome"/>
</dbReference>
<dbReference type="GO" id="GO:0005737">
    <property type="term" value="C:cytoplasm"/>
    <property type="evidence" value="ECO:0007669"/>
    <property type="project" value="UniProtKB-SubCell"/>
</dbReference>
<dbReference type="GO" id="GO:0005886">
    <property type="term" value="C:plasma membrane"/>
    <property type="evidence" value="ECO:0007669"/>
    <property type="project" value="UniProtKB-SubCell"/>
</dbReference>
<dbReference type="GO" id="GO:0046872">
    <property type="term" value="F:metal ion binding"/>
    <property type="evidence" value="ECO:0007669"/>
    <property type="project" value="UniProtKB-KW"/>
</dbReference>
<dbReference type="GO" id="GO:0008758">
    <property type="term" value="F:UDP-2,3-diacylglucosamine hydrolase activity"/>
    <property type="evidence" value="ECO:0007669"/>
    <property type="project" value="TreeGrafter"/>
</dbReference>
<dbReference type="GO" id="GO:0009245">
    <property type="term" value="P:lipid A biosynthetic process"/>
    <property type="evidence" value="ECO:0007669"/>
    <property type="project" value="TreeGrafter"/>
</dbReference>
<dbReference type="CDD" id="cd07398">
    <property type="entry name" value="MPP_YbbF-LpxH"/>
    <property type="match status" value="1"/>
</dbReference>
<dbReference type="Gene3D" id="3.60.21.10">
    <property type="match status" value="1"/>
</dbReference>
<dbReference type="InterPro" id="IPR004843">
    <property type="entry name" value="Calcineurin-like_PHP_ApaH"/>
</dbReference>
<dbReference type="InterPro" id="IPR043461">
    <property type="entry name" value="LpxH-like"/>
</dbReference>
<dbReference type="InterPro" id="IPR029052">
    <property type="entry name" value="Metallo-depent_PP-like"/>
</dbReference>
<dbReference type="PANTHER" id="PTHR34990:SF1">
    <property type="entry name" value="UDP-2,3-DIACYLGLUCOSAMINE HYDROLASE"/>
    <property type="match status" value="1"/>
</dbReference>
<dbReference type="PANTHER" id="PTHR34990">
    <property type="entry name" value="UDP-2,3-DIACYLGLUCOSAMINE HYDROLASE-RELATED"/>
    <property type="match status" value="1"/>
</dbReference>
<dbReference type="Pfam" id="PF00149">
    <property type="entry name" value="Metallophos"/>
    <property type="match status" value="1"/>
</dbReference>
<dbReference type="SUPFAM" id="SSF56300">
    <property type="entry name" value="Metallo-dependent phosphatases"/>
    <property type="match status" value="1"/>
</dbReference>
<organism evidence="7">
    <name type="scientific">Porphyromonas gingivalis (strain ATCC BAA-308 / W83)</name>
    <dbReference type="NCBI Taxonomy" id="242619"/>
    <lineage>
        <taxon>Bacteria</taxon>
        <taxon>Pseudomonadati</taxon>
        <taxon>Bacteroidota</taxon>
        <taxon>Bacteroidia</taxon>
        <taxon>Bacteroidales</taxon>
        <taxon>Porphyromonadaceae</taxon>
        <taxon>Porphyromonas</taxon>
    </lineage>
</organism>
<protein>
    <recommendedName>
        <fullName evidence="1">UDP-2,3-diacylglucosamine hydrolase</fullName>
        <ecNumber evidence="2">3.6.1.54</ecNumber>
    </recommendedName>
</protein>
<proteinExistence type="evidence at transcript level"/>
<keyword id="KW-0997">Cell inner membrane</keyword>
<keyword id="KW-1003">Cell membrane</keyword>
<keyword id="KW-0963">Cytoplasm</keyword>
<keyword id="KW-0378">Hydrolase</keyword>
<keyword id="KW-0464">Manganese</keyword>
<keyword id="KW-0472">Membrane</keyword>
<keyword id="KW-0479">Metal-binding</keyword>
<keyword id="KW-1185">Reference proteome</keyword>